<keyword id="KW-0007">Acetylation</keyword>
<keyword id="KW-0963">Cytoplasm</keyword>
<keyword id="KW-0539">Nucleus</keyword>
<keyword id="KW-0597">Phosphoprotein</keyword>
<keyword id="KW-1185">Reference proteome</keyword>
<dbReference type="EMBL" id="BC102268">
    <property type="protein sequence ID" value="AAI02269.1"/>
    <property type="molecule type" value="mRNA"/>
</dbReference>
<dbReference type="RefSeq" id="NP_001029906.1">
    <property type="nucleotide sequence ID" value="NM_001034734.2"/>
</dbReference>
<dbReference type="FunCoup" id="Q3T0T5">
    <property type="interactions" value="786"/>
</dbReference>
<dbReference type="STRING" id="9913.ENSBTAP00000040191"/>
<dbReference type="PaxDb" id="9913-ENSBTAP00000040191"/>
<dbReference type="PeptideAtlas" id="Q3T0T5"/>
<dbReference type="Ensembl" id="ENSBTAT00000132131.1">
    <property type="protein sequence ID" value="ENSBTAP00000074757.1"/>
    <property type="gene ID" value="ENSBTAG00000061800.1"/>
</dbReference>
<dbReference type="GeneID" id="613381"/>
<dbReference type="KEGG" id="bta:613381"/>
<dbReference type="CTD" id="51155"/>
<dbReference type="VEuPathDB" id="HostDB:ENSBTAG00000030170"/>
<dbReference type="eggNOG" id="ENOG502S346">
    <property type="taxonomic scope" value="Eukaryota"/>
</dbReference>
<dbReference type="GeneTree" id="ENSGT00940000164037"/>
<dbReference type="HOGENOM" id="CLU_123394_0_0_1"/>
<dbReference type="InParanoid" id="Q3T0T5"/>
<dbReference type="OMA" id="KGEGNIH"/>
<dbReference type="OrthoDB" id="10071234at2759"/>
<dbReference type="TreeFam" id="TF327169"/>
<dbReference type="Proteomes" id="UP000009136">
    <property type="component" value="Chromosome 19"/>
</dbReference>
<dbReference type="Bgee" id="ENSBTAG00000030170">
    <property type="expression patterns" value="Expressed in Ammon's horn and 106 other cell types or tissues"/>
</dbReference>
<dbReference type="GO" id="GO:0005829">
    <property type="term" value="C:cytosol"/>
    <property type="evidence" value="ECO:0007669"/>
    <property type="project" value="Ensembl"/>
</dbReference>
<dbReference type="GO" id="GO:0045171">
    <property type="term" value="C:intercellular bridge"/>
    <property type="evidence" value="ECO:0007669"/>
    <property type="project" value="Ensembl"/>
</dbReference>
<dbReference type="GO" id="GO:0015630">
    <property type="term" value="C:microtubule cytoskeleton"/>
    <property type="evidence" value="ECO:0007669"/>
    <property type="project" value="Ensembl"/>
</dbReference>
<dbReference type="GO" id="GO:0005654">
    <property type="term" value="C:nucleoplasm"/>
    <property type="evidence" value="ECO:0007669"/>
    <property type="project" value="Ensembl"/>
</dbReference>
<dbReference type="GO" id="GO:0005634">
    <property type="term" value="C:nucleus"/>
    <property type="evidence" value="ECO:0000318"/>
    <property type="project" value="GO_Central"/>
</dbReference>
<dbReference type="InterPro" id="IPR033335">
    <property type="entry name" value="JUPITER"/>
</dbReference>
<dbReference type="PANTHER" id="PTHR34930">
    <property type="entry name" value="GEO05313P1"/>
    <property type="match status" value="1"/>
</dbReference>
<dbReference type="PANTHER" id="PTHR34930:SF4">
    <property type="entry name" value="JUPITER MICROTUBULE ASSOCIATED HOMOLOG 1"/>
    <property type="match status" value="1"/>
</dbReference>
<name>JUPI1_BOVIN</name>
<reference key="1">
    <citation type="submission" date="2005-08" db="EMBL/GenBank/DDBJ databases">
        <authorList>
            <consortium name="NIH - Mammalian Gene Collection (MGC) project"/>
        </authorList>
    </citation>
    <scope>NUCLEOTIDE SEQUENCE [LARGE SCALE MRNA]</scope>
    <source>
        <strain>Crossbred X Angus</strain>
        <tissue>Ileum</tissue>
    </source>
</reference>
<evidence type="ECO:0000250" key="1">
    <source>
        <dbReference type="UniProtKB" id="Q9UK76"/>
    </source>
</evidence>
<evidence type="ECO:0000256" key="2">
    <source>
        <dbReference type="SAM" id="MobiDB-lite"/>
    </source>
</evidence>
<evidence type="ECO:0000305" key="3"/>
<accession>Q3T0T5</accession>
<proteinExistence type="evidence at transcript level"/>
<gene>
    <name evidence="1" type="primary">JPT1</name>
    <name evidence="1" type="synonym">HN1</name>
</gene>
<feature type="chain" id="PRO_0000054917" description="Jupiter microtubule associated homolog 1">
    <location>
        <begin position="1"/>
        <end position="154"/>
    </location>
</feature>
<feature type="initiator methionine" description="Removed; alternate" evidence="1">
    <location>
        <position position="1"/>
    </location>
</feature>
<feature type="chain" id="PRO_0000424486" description="Jupiter microtubule associated homolog 1, N-terminally processed">
    <location>
        <begin position="2"/>
        <end position="154"/>
    </location>
</feature>
<feature type="region of interest" description="Disordered" evidence="2">
    <location>
        <begin position="1"/>
        <end position="154"/>
    </location>
</feature>
<feature type="compositionally biased region" description="Polar residues" evidence="2">
    <location>
        <begin position="1"/>
        <end position="19"/>
    </location>
</feature>
<feature type="compositionally biased region" description="Polar residues" evidence="2">
    <location>
        <begin position="80"/>
        <end position="91"/>
    </location>
</feature>
<feature type="compositionally biased region" description="Basic and acidic residues" evidence="2">
    <location>
        <begin position="96"/>
        <end position="108"/>
    </location>
</feature>
<feature type="compositionally biased region" description="Pro residues" evidence="2">
    <location>
        <begin position="125"/>
        <end position="138"/>
    </location>
</feature>
<feature type="modified residue" description="N-acetylmethionine" evidence="1">
    <location>
        <position position="1"/>
    </location>
</feature>
<feature type="modified residue" description="N-acetylthreonine; in Hematological and neurological expressed 1 protein, N-terminally processed" evidence="1">
    <location>
        <position position="2"/>
    </location>
</feature>
<feature type="modified residue" description="Phosphoserine" evidence="1">
    <location>
        <position position="28"/>
    </location>
</feature>
<feature type="modified residue" description="Phosphoserine" evidence="1">
    <location>
        <position position="31"/>
    </location>
</feature>
<feature type="modified residue" description="Phosphothreonine" evidence="1">
    <location>
        <position position="54"/>
    </location>
</feature>
<feature type="modified residue" description="Phosphoserine" evidence="1">
    <location>
        <position position="71"/>
    </location>
</feature>
<feature type="modified residue" description="Phosphoserine" evidence="1">
    <location>
        <position position="80"/>
    </location>
</feature>
<feature type="modified residue" description="Phosphoserine" evidence="1">
    <location>
        <position position="87"/>
    </location>
</feature>
<feature type="modified residue" description="Phosphoserine" evidence="1">
    <location>
        <position position="88"/>
    </location>
</feature>
<feature type="modified residue" description="Phosphoserine" evidence="1">
    <location>
        <position position="92"/>
    </location>
</feature>
<feature type="modified residue" description="Phosphoserine" evidence="1">
    <location>
        <position position="131"/>
    </location>
</feature>
<feature type="modified residue" description="N6-acetyllysine" evidence="1">
    <location>
        <position position="148"/>
    </location>
</feature>
<comment type="function">
    <text evidence="1">Modulates negatively AKT-mediated GSK3B signaling. Induces CTNNB1 'Ser-33' phosphorylation and degradation through the suppression of the inhibitory 'Ser-9' phosphorylation of GSK3B, which represses the function of the APC:CTNNB1:GSK3B complex and the interaction with CDH1/E-cadherin in adherent junctions. Plays a role in the regulation of cell cycle and cell adhesion. Has an inhibitory role on AR-signaling pathway through the induction of receptor proteasomal degradation.</text>
</comment>
<comment type="subunit">
    <text evidence="1">Interacts with the complex composed, at least, of APC, CTNNB1 and GSK3B; the interaction takes place with the inactive form of GSK3B (phosphorylated at 'Ser-9').</text>
</comment>
<comment type="subcellular location">
    <subcellularLocation>
        <location evidence="1">Nucleus</location>
    </subcellularLocation>
    <subcellularLocation>
        <location evidence="1">Cytoplasm</location>
    </subcellularLocation>
</comment>
<comment type="similarity">
    <text evidence="3">Belongs to the JUPITER family.</text>
</comment>
<organism>
    <name type="scientific">Bos taurus</name>
    <name type="common">Bovine</name>
    <dbReference type="NCBI Taxonomy" id="9913"/>
    <lineage>
        <taxon>Eukaryota</taxon>
        <taxon>Metazoa</taxon>
        <taxon>Chordata</taxon>
        <taxon>Craniata</taxon>
        <taxon>Vertebrata</taxon>
        <taxon>Euteleostomi</taxon>
        <taxon>Mammalia</taxon>
        <taxon>Eutheria</taxon>
        <taxon>Laurasiatheria</taxon>
        <taxon>Artiodactyla</taxon>
        <taxon>Ruminantia</taxon>
        <taxon>Pecora</taxon>
        <taxon>Bovidae</taxon>
        <taxon>Bovinae</taxon>
        <taxon>Bos</taxon>
    </lineage>
</organism>
<protein>
    <recommendedName>
        <fullName evidence="1">Jupiter microtubule associated homolog 1</fullName>
    </recommendedName>
    <alternativeName>
        <fullName evidence="1">Hematological and neurological expressed 1 protein</fullName>
    </alternativeName>
    <component>
        <recommendedName>
            <fullName>Jupiter microtubule associated homolog 1, N-terminally processed</fullName>
        </recommendedName>
    </component>
</protein>
<sequence length="154" mass="16010">MTTTTTFKGVDPNSRNSSRVLRPPGGGSNFSLGFDEPTEQPVRRNKMASSIFGTPEENPPSWAKSAGAKSSGGREDAESSGPQRRNSSEANSGDFLDLKGEGDVHENVDTDLQASLGQSEEKPVPAAPVPSPVAPAPVPSRRNPPGGKSSLVLG</sequence>